<organism>
    <name type="scientific">Rhodococcus erythropolis (strain PR4 / NBRC 100887)</name>
    <dbReference type="NCBI Taxonomy" id="234621"/>
    <lineage>
        <taxon>Bacteria</taxon>
        <taxon>Bacillati</taxon>
        <taxon>Actinomycetota</taxon>
        <taxon>Actinomycetes</taxon>
        <taxon>Mycobacteriales</taxon>
        <taxon>Nocardiaceae</taxon>
        <taxon>Rhodococcus</taxon>
        <taxon>Rhodococcus erythropolis group</taxon>
    </lineage>
</organism>
<protein>
    <recommendedName>
        <fullName evidence="1">3-dehydroquinate synthase</fullName>
        <shortName evidence="1">DHQS</shortName>
        <ecNumber evidence="1">4.2.3.4</ecNumber>
    </recommendedName>
</protein>
<reference key="1">
    <citation type="submission" date="2005-03" db="EMBL/GenBank/DDBJ databases">
        <title>Comparison of the complete genome sequences of Rhodococcus erythropolis PR4 and Rhodococcus opacus B4.</title>
        <authorList>
            <person name="Takarada H."/>
            <person name="Sekine M."/>
            <person name="Hosoyama A."/>
            <person name="Yamada R."/>
            <person name="Fujisawa T."/>
            <person name="Omata S."/>
            <person name="Shimizu A."/>
            <person name="Tsukatani N."/>
            <person name="Tanikawa S."/>
            <person name="Fujita N."/>
            <person name="Harayama S."/>
        </authorList>
    </citation>
    <scope>NUCLEOTIDE SEQUENCE [LARGE SCALE GENOMIC DNA]</scope>
    <source>
        <strain>PR4 / NBRC 100887</strain>
    </source>
</reference>
<keyword id="KW-0028">Amino-acid biosynthesis</keyword>
<keyword id="KW-0057">Aromatic amino acid biosynthesis</keyword>
<keyword id="KW-0170">Cobalt</keyword>
<keyword id="KW-0963">Cytoplasm</keyword>
<keyword id="KW-0456">Lyase</keyword>
<keyword id="KW-0479">Metal-binding</keyword>
<keyword id="KW-0520">NAD</keyword>
<keyword id="KW-0547">Nucleotide-binding</keyword>
<keyword id="KW-0862">Zinc</keyword>
<sequence length="369" mass="38960">MTEPVRVEVKTASPYPVVIGRGLLGDLVAEFDGARTVAIFHQPPLAETAEAVRAALAEKGIDAHRIEIPDAEDGKDLAVAGFCWDVLGRIGLTRSDAIMSLGGGAATDLTGFVAATWMRGVKVVHVPTTLLAMVDAAVGGKTGINTEAGKNLVGSFHEPGAVFIDLATLETVPHNEIVAGMAEVIKTGFIADPVILDLIEADPKAALDPSGTVLPELIRRSVEVKAKVVAADLRESDLREILNYGHTLGHAIERRERYKWRHGAAVSVGLVFAAELGRLAGRLDDATADRHKSILDLVGLPTSYDGDAFGDLMKGMQTDKKNRAGLLRFVVLDGLAKPGRLEGPDPSLLVAAYSAIARDPRPAGGTVLL</sequence>
<name>AROB_RHOE4</name>
<accession>C0ZZB6</accession>
<feature type="chain" id="PRO_1000202919" description="3-dehydroquinate synthase">
    <location>
        <begin position="1"/>
        <end position="369"/>
    </location>
</feature>
<feature type="binding site" evidence="1">
    <location>
        <begin position="70"/>
        <end position="75"/>
    </location>
    <ligand>
        <name>NAD(+)</name>
        <dbReference type="ChEBI" id="CHEBI:57540"/>
    </ligand>
</feature>
<feature type="binding site" evidence="1">
    <location>
        <begin position="104"/>
        <end position="108"/>
    </location>
    <ligand>
        <name>NAD(+)</name>
        <dbReference type="ChEBI" id="CHEBI:57540"/>
    </ligand>
</feature>
<feature type="binding site" evidence="1">
    <location>
        <begin position="128"/>
        <end position="129"/>
    </location>
    <ligand>
        <name>NAD(+)</name>
        <dbReference type="ChEBI" id="CHEBI:57540"/>
    </ligand>
</feature>
<feature type="binding site" evidence="1">
    <location>
        <position position="141"/>
    </location>
    <ligand>
        <name>NAD(+)</name>
        <dbReference type="ChEBI" id="CHEBI:57540"/>
    </ligand>
</feature>
<feature type="binding site" evidence="1">
    <location>
        <position position="150"/>
    </location>
    <ligand>
        <name>NAD(+)</name>
        <dbReference type="ChEBI" id="CHEBI:57540"/>
    </ligand>
</feature>
<feature type="binding site" evidence="1">
    <location>
        <begin position="168"/>
        <end position="171"/>
    </location>
    <ligand>
        <name>NAD(+)</name>
        <dbReference type="ChEBI" id="CHEBI:57540"/>
    </ligand>
</feature>
<feature type="binding site" evidence="1">
    <location>
        <position position="183"/>
    </location>
    <ligand>
        <name>Zn(2+)</name>
        <dbReference type="ChEBI" id="CHEBI:29105"/>
    </ligand>
</feature>
<feature type="binding site" evidence="1">
    <location>
        <position position="246"/>
    </location>
    <ligand>
        <name>Zn(2+)</name>
        <dbReference type="ChEBI" id="CHEBI:29105"/>
    </ligand>
</feature>
<feature type="binding site" evidence="1">
    <location>
        <position position="262"/>
    </location>
    <ligand>
        <name>Zn(2+)</name>
        <dbReference type="ChEBI" id="CHEBI:29105"/>
    </ligand>
</feature>
<evidence type="ECO:0000255" key="1">
    <source>
        <dbReference type="HAMAP-Rule" id="MF_00110"/>
    </source>
</evidence>
<proteinExistence type="inferred from homology"/>
<dbReference type="EC" id="4.2.3.4" evidence="1"/>
<dbReference type="EMBL" id="AP008957">
    <property type="protein sequence ID" value="BAH33701.1"/>
    <property type="molecule type" value="Genomic_DNA"/>
</dbReference>
<dbReference type="RefSeq" id="WP_020907694.1">
    <property type="nucleotide sequence ID" value="NC_012490.1"/>
</dbReference>
<dbReference type="SMR" id="C0ZZB6"/>
<dbReference type="GeneID" id="57487067"/>
<dbReference type="KEGG" id="rer:RER_29930"/>
<dbReference type="eggNOG" id="COG0337">
    <property type="taxonomic scope" value="Bacteria"/>
</dbReference>
<dbReference type="HOGENOM" id="CLU_001201_0_3_11"/>
<dbReference type="UniPathway" id="UPA00053">
    <property type="reaction ID" value="UER00085"/>
</dbReference>
<dbReference type="Proteomes" id="UP000002204">
    <property type="component" value="Chromosome"/>
</dbReference>
<dbReference type="GO" id="GO:0005737">
    <property type="term" value="C:cytoplasm"/>
    <property type="evidence" value="ECO:0007669"/>
    <property type="project" value="UniProtKB-SubCell"/>
</dbReference>
<dbReference type="GO" id="GO:0003856">
    <property type="term" value="F:3-dehydroquinate synthase activity"/>
    <property type="evidence" value="ECO:0007669"/>
    <property type="project" value="UniProtKB-UniRule"/>
</dbReference>
<dbReference type="GO" id="GO:0046872">
    <property type="term" value="F:metal ion binding"/>
    <property type="evidence" value="ECO:0007669"/>
    <property type="project" value="UniProtKB-KW"/>
</dbReference>
<dbReference type="GO" id="GO:0000166">
    <property type="term" value="F:nucleotide binding"/>
    <property type="evidence" value="ECO:0007669"/>
    <property type="project" value="UniProtKB-KW"/>
</dbReference>
<dbReference type="GO" id="GO:0008652">
    <property type="term" value="P:amino acid biosynthetic process"/>
    <property type="evidence" value="ECO:0007669"/>
    <property type="project" value="UniProtKB-KW"/>
</dbReference>
<dbReference type="GO" id="GO:0009073">
    <property type="term" value="P:aromatic amino acid family biosynthetic process"/>
    <property type="evidence" value="ECO:0007669"/>
    <property type="project" value="UniProtKB-KW"/>
</dbReference>
<dbReference type="GO" id="GO:0009423">
    <property type="term" value="P:chorismate biosynthetic process"/>
    <property type="evidence" value="ECO:0007669"/>
    <property type="project" value="UniProtKB-UniRule"/>
</dbReference>
<dbReference type="CDD" id="cd08195">
    <property type="entry name" value="DHQS"/>
    <property type="match status" value="1"/>
</dbReference>
<dbReference type="FunFam" id="3.40.50.1970:FF:000012">
    <property type="entry name" value="3-dehydroquinate synthase"/>
    <property type="match status" value="1"/>
</dbReference>
<dbReference type="Gene3D" id="3.40.50.1970">
    <property type="match status" value="1"/>
</dbReference>
<dbReference type="Gene3D" id="1.20.1090.10">
    <property type="entry name" value="Dehydroquinate synthase-like - alpha domain"/>
    <property type="match status" value="1"/>
</dbReference>
<dbReference type="HAMAP" id="MF_00110">
    <property type="entry name" value="DHQ_synthase"/>
    <property type="match status" value="1"/>
</dbReference>
<dbReference type="InterPro" id="IPR050071">
    <property type="entry name" value="Dehydroquinate_synthase"/>
</dbReference>
<dbReference type="InterPro" id="IPR016037">
    <property type="entry name" value="DHQ_synth_AroB"/>
</dbReference>
<dbReference type="InterPro" id="IPR030963">
    <property type="entry name" value="DHQ_synth_fam"/>
</dbReference>
<dbReference type="InterPro" id="IPR030960">
    <property type="entry name" value="DHQS/DOIS_N"/>
</dbReference>
<dbReference type="InterPro" id="IPR056179">
    <property type="entry name" value="DHQS_C"/>
</dbReference>
<dbReference type="NCBIfam" id="TIGR01357">
    <property type="entry name" value="aroB"/>
    <property type="match status" value="1"/>
</dbReference>
<dbReference type="PANTHER" id="PTHR43622">
    <property type="entry name" value="3-DEHYDROQUINATE SYNTHASE"/>
    <property type="match status" value="1"/>
</dbReference>
<dbReference type="PANTHER" id="PTHR43622:SF7">
    <property type="entry name" value="3-DEHYDROQUINATE SYNTHASE, CHLOROPLASTIC"/>
    <property type="match status" value="1"/>
</dbReference>
<dbReference type="Pfam" id="PF01761">
    <property type="entry name" value="DHQ_synthase"/>
    <property type="match status" value="1"/>
</dbReference>
<dbReference type="Pfam" id="PF24621">
    <property type="entry name" value="DHQS_C"/>
    <property type="match status" value="1"/>
</dbReference>
<dbReference type="PIRSF" id="PIRSF001455">
    <property type="entry name" value="DHQ_synth"/>
    <property type="match status" value="1"/>
</dbReference>
<dbReference type="SUPFAM" id="SSF56796">
    <property type="entry name" value="Dehydroquinate synthase-like"/>
    <property type="match status" value="1"/>
</dbReference>
<gene>
    <name evidence="1" type="primary">aroB</name>
    <name type="ordered locus">RER_29930</name>
</gene>
<comment type="function">
    <text evidence="1">Catalyzes the conversion of 3-deoxy-D-arabino-heptulosonate 7-phosphate (DAHP) to dehydroquinate (DHQ).</text>
</comment>
<comment type="catalytic activity">
    <reaction evidence="1">
        <text>7-phospho-2-dehydro-3-deoxy-D-arabino-heptonate = 3-dehydroquinate + phosphate</text>
        <dbReference type="Rhea" id="RHEA:21968"/>
        <dbReference type="ChEBI" id="CHEBI:32364"/>
        <dbReference type="ChEBI" id="CHEBI:43474"/>
        <dbReference type="ChEBI" id="CHEBI:58394"/>
        <dbReference type="EC" id="4.2.3.4"/>
    </reaction>
</comment>
<comment type="cofactor">
    <cofactor evidence="1">
        <name>Co(2+)</name>
        <dbReference type="ChEBI" id="CHEBI:48828"/>
    </cofactor>
    <cofactor evidence="1">
        <name>Zn(2+)</name>
        <dbReference type="ChEBI" id="CHEBI:29105"/>
    </cofactor>
    <text evidence="1">Binds 1 divalent metal cation per subunit. Can use either Co(2+) or Zn(2+).</text>
</comment>
<comment type="cofactor">
    <cofactor evidence="1">
        <name>NAD(+)</name>
        <dbReference type="ChEBI" id="CHEBI:57540"/>
    </cofactor>
</comment>
<comment type="pathway">
    <text evidence="1">Metabolic intermediate biosynthesis; chorismate biosynthesis; chorismate from D-erythrose 4-phosphate and phosphoenolpyruvate: step 2/7.</text>
</comment>
<comment type="subcellular location">
    <subcellularLocation>
        <location evidence="1">Cytoplasm</location>
    </subcellularLocation>
</comment>
<comment type="similarity">
    <text evidence="1">Belongs to the sugar phosphate cyclases superfamily. Dehydroquinate synthase family.</text>
</comment>